<dbReference type="EC" id="3.6.4.12"/>
<dbReference type="EMBL" id="CM002242">
    <property type="protein sequence ID" value="EAA29066.1"/>
    <property type="molecule type" value="Genomic_DNA"/>
</dbReference>
<dbReference type="RefSeq" id="XP_958302.1">
    <property type="nucleotide sequence ID" value="XM_953209.2"/>
</dbReference>
<dbReference type="SMR" id="Q7S133"/>
<dbReference type="FunCoup" id="Q7S133">
    <property type="interactions" value="182"/>
</dbReference>
<dbReference type="STRING" id="367110.Q7S133"/>
<dbReference type="PaxDb" id="5141-EFNCRP00000009765"/>
<dbReference type="EnsemblFungi" id="EAA29066">
    <property type="protein sequence ID" value="EAA29066"/>
    <property type="gene ID" value="NCU09993"/>
</dbReference>
<dbReference type="GeneID" id="3874449"/>
<dbReference type="KEGG" id="ncr:NCU09993"/>
<dbReference type="VEuPathDB" id="FungiDB:NCU09993"/>
<dbReference type="HOGENOM" id="CLU_000315_24_0_1"/>
<dbReference type="InParanoid" id="Q7S133"/>
<dbReference type="OMA" id="KLFAQWC"/>
<dbReference type="OrthoDB" id="372624at2759"/>
<dbReference type="Proteomes" id="UP000001805">
    <property type="component" value="Chromosome 7, Linkage Group VII"/>
</dbReference>
<dbReference type="GO" id="GO:0000812">
    <property type="term" value="C:Swr1 complex"/>
    <property type="evidence" value="ECO:0000318"/>
    <property type="project" value="GO_Central"/>
</dbReference>
<dbReference type="GO" id="GO:0005524">
    <property type="term" value="F:ATP binding"/>
    <property type="evidence" value="ECO:0007669"/>
    <property type="project" value="UniProtKB-KW"/>
</dbReference>
<dbReference type="GO" id="GO:0016887">
    <property type="term" value="F:ATP hydrolysis activity"/>
    <property type="evidence" value="ECO:0000318"/>
    <property type="project" value="GO_Central"/>
</dbReference>
<dbReference type="GO" id="GO:0003677">
    <property type="term" value="F:DNA binding"/>
    <property type="evidence" value="ECO:0007669"/>
    <property type="project" value="UniProtKB-KW"/>
</dbReference>
<dbReference type="GO" id="GO:0004386">
    <property type="term" value="F:helicase activity"/>
    <property type="evidence" value="ECO:0007669"/>
    <property type="project" value="UniProtKB-KW"/>
</dbReference>
<dbReference type="GO" id="GO:0042393">
    <property type="term" value="F:histone binding"/>
    <property type="evidence" value="ECO:0000318"/>
    <property type="project" value="GO_Central"/>
</dbReference>
<dbReference type="GO" id="GO:0006338">
    <property type="term" value="P:chromatin remodeling"/>
    <property type="evidence" value="ECO:0000318"/>
    <property type="project" value="GO_Central"/>
</dbReference>
<dbReference type="CDD" id="cd18003">
    <property type="entry name" value="DEXQc_SRCAP"/>
    <property type="match status" value="1"/>
</dbReference>
<dbReference type="CDD" id="cd18793">
    <property type="entry name" value="SF2_C_SNF"/>
    <property type="match status" value="1"/>
</dbReference>
<dbReference type="FunFam" id="3.40.50.10810:FF:000005">
    <property type="entry name" value="Photoperiod-independent early flowering 1"/>
    <property type="match status" value="1"/>
</dbReference>
<dbReference type="FunFam" id="3.40.50.300:FF:000655">
    <property type="entry name" value="Protein PHOTOPERIOD-INDEPENDENT EARLY FLOWERING 1"/>
    <property type="match status" value="1"/>
</dbReference>
<dbReference type="Gene3D" id="3.40.50.300">
    <property type="entry name" value="P-loop containing nucleotide triphosphate hydrolases"/>
    <property type="match status" value="1"/>
</dbReference>
<dbReference type="Gene3D" id="1.20.120.850">
    <property type="entry name" value="SWI2/SNF2 ATPases, N-terminal domain"/>
    <property type="match status" value="1"/>
</dbReference>
<dbReference type="Gene3D" id="3.40.50.10810">
    <property type="entry name" value="Tandem AAA-ATPase domain"/>
    <property type="match status" value="1"/>
</dbReference>
<dbReference type="InterPro" id="IPR002464">
    <property type="entry name" value="DNA/RNA_helicase_DEAH_CS"/>
</dbReference>
<dbReference type="InterPro" id="IPR014001">
    <property type="entry name" value="Helicase_ATP-bd"/>
</dbReference>
<dbReference type="InterPro" id="IPR001650">
    <property type="entry name" value="Helicase_C-like"/>
</dbReference>
<dbReference type="InterPro" id="IPR014012">
    <property type="entry name" value="HSA_dom"/>
</dbReference>
<dbReference type="InterPro" id="IPR050520">
    <property type="entry name" value="INO80/SWR1_helicase"/>
</dbReference>
<dbReference type="InterPro" id="IPR027417">
    <property type="entry name" value="P-loop_NTPase"/>
</dbReference>
<dbReference type="InterPro" id="IPR038718">
    <property type="entry name" value="SNF2-like_sf"/>
</dbReference>
<dbReference type="InterPro" id="IPR049730">
    <property type="entry name" value="SNF2/RAD54-like_C"/>
</dbReference>
<dbReference type="InterPro" id="IPR000330">
    <property type="entry name" value="SNF2_N"/>
</dbReference>
<dbReference type="PANTHER" id="PTHR45685:SF1">
    <property type="entry name" value="HELICASE SRCAP"/>
    <property type="match status" value="1"/>
</dbReference>
<dbReference type="PANTHER" id="PTHR45685">
    <property type="entry name" value="HELICASE SRCAP-RELATED"/>
    <property type="match status" value="1"/>
</dbReference>
<dbReference type="Pfam" id="PF00271">
    <property type="entry name" value="Helicase_C"/>
    <property type="match status" value="1"/>
</dbReference>
<dbReference type="Pfam" id="PF00176">
    <property type="entry name" value="SNF2-rel_dom"/>
    <property type="match status" value="1"/>
</dbReference>
<dbReference type="SMART" id="SM00487">
    <property type="entry name" value="DEXDc"/>
    <property type="match status" value="1"/>
</dbReference>
<dbReference type="SMART" id="SM00490">
    <property type="entry name" value="HELICc"/>
    <property type="match status" value="1"/>
</dbReference>
<dbReference type="SUPFAM" id="SSF52540">
    <property type="entry name" value="P-loop containing nucleoside triphosphate hydrolases"/>
    <property type="match status" value="2"/>
</dbReference>
<dbReference type="PROSITE" id="PS00690">
    <property type="entry name" value="DEAH_ATP_HELICASE"/>
    <property type="match status" value="1"/>
</dbReference>
<dbReference type="PROSITE" id="PS51192">
    <property type="entry name" value="HELICASE_ATP_BIND_1"/>
    <property type="match status" value="1"/>
</dbReference>
<dbReference type="PROSITE" id="PS51194">
    <property type="entry name" value="HELICASE_CTER"/>
    <property type="match status" value="1"/>
</dbReference>
<dbReference type="PROSITE" id="PS51204">
    <property type="entry name" value="HSA"/>
    <property type="match status" value="1"/>
</dbReference>
<sequence>MTTMMTDSGTASDSGAGLVDSTRNDTTTTTTTTTTPGDNDADDDNTNGTTTGHHDNNETDNNSKSYSSTHHVPAIDNTSTTNANDNEDAAGFLDRDQSPLSSISSPLSEPDNFEFDTEPIPSILSPKSTTSDNHARDGETPELDEDGQPPAKRRRVRETTPHNHSRKPKPESPPWKKFEAEGPTTIITEDGRRKSGRVNPVLLGMKPSDKKVTRKAIQTSPVSNKSSASTSRKPAPASSSNSKHAPAKMPPPPPPPKAPARKSATTHETRPSASRSRRRSPSPRRPATPPKPAAVGTRRSTRQALAHSRASYDDGQLSPGASRATPRIKLKVRPPLTVIPLVHPNQANVRPKLGPTFEEYFARAHEIPVEEGGQHIPDEEPKYTDEMALQDAKVILRVEKEVEPGGLLAPDRCSAFEPEAEEEPPRQWAHLDHLTKAMTNFRKLMYREQQLHMQAAKRIAIACEAEWRRRNPQPKTAEEIELEEMEASKAKWRQVIRAFAGTWENVRVEVNRRRLVEWEAEEQRRVKAALNQAVNLSEQKLQQRQAQVDGDEITDEDEDEDDEDLASGMPSVMGDEKESDEHSDQGSDEMSDENDEDEDEDNMSSSEDDDKKSTASDEGLTQEELRAKYANLPTLGTTDETEETTKDVEMADAPAAMDGSVANDDDTSDESVDMDDDLGSSEESDDDEEEEEDDEEEEESDDEPAGLLGLFFGKSELKKLKEEAVTEEPSVEPAGDVEMTDASAALRPELQVNGHAHEAPITNGTHTNEQLASSQTEGADDEVSLLVIPNDEIAAENTQTAAEPGSGVVEKDFLTNDSSLKYPNEIVQSENQTLPAKESVEAGGDLPMVDAPSTDDLQRETAAAPSLEAPPNTRHDSQETVAATDMQSQSQTQSPKTTDTKPTDVDTPHSELAVSVQKPDSRQSSPQPTTPTVKTEIPFLLRGTLREYQHHGLDWLAGLYANNTNGILADEMGLGKTIQTIALLAHLACHHEVWGPHLVIVPTSVMLNWEMEFKKWCPGFKILTYYGNQEERKRKRQGWNNDDVWNVCITSYQMVLQDQQVFRRRRWHYMILDEAHNIKNFKSQRWQTLLGFNTQARLLLTGTPLQNNLTELWSLLYFLAPPENGEGGFVDLTEFHNWFARPESQILESGREQLDDEARAIIAKLHKVLRPYLLRRLKADVEKQMPAKYEHVEFCRLSKRQRELYDGFLSRADTRETLQSGNYMSIINCLMQLRKVCNHPDLFVDRPIMTSFRMSRSVPADYEWKEKFIRNRLLATKPMTTVNLSFLNMIPTEYEDLSKTHTDRIAQLSSHRILLDLREAQKVRANNAYTALDPSSVKSNLVYLESAARWGRFEELQHCVYINALRRQQRPIYGKRLTEFLTLDTHLRPYKPRPRVPAKIMSWFEEDSFLLHNAIPTLQQRAESMEMTITKFACVTPAVVTGPEMNRFLLGERGIQLFEDLDLKLSAPVKYAPYMPPQPPPDPWHEARMRLTIQFPDKRLLQYDCGKLQALDKLLRKLQAGGHRALIFTQMTKVLDILEQFLNIHGHKYLRLDGATKVEQRQILTDRFNHDPRILCFILSTRSGGLGINLTGADTVIFYDQDWNPAMDKQCQDRCHRIGQTRDVHIYRLVSEHTIEANILRKASQKQMLDDVVIQEGEFTTDYFNRLSVRDVLGSNGEVIASNEDDVAANLAMDRVLGGPSTTGAGGYDGTADGGGGASQPPVRNVGRVLEMAEDREDVDAAKAAEKEIMQDEADFGEAGSTRPGTPGDGLADLDGQLLGGEENKEVEDEVIEYNAWGERMHTIDEYMLGFMAKALEGTPLELPRDRKKGRDRNRNRKGKDSRKR</sequence>
<comment type="function">
    <text evidence="1">Catalytic component of the SWR1 complex which mediates the ATP-dependent exchange of histone H2A for the H2A variant H2A.Z leading to transcriptional regulation of selected genes by chromatin remodeling.</text>
</comment>
<comment type="catalytic activity">
    <reaction>
        <text>ATP + H2O = ADP + phosphate + H(+)</text>
        <dbReference type="Rhea" id="RHEA:13065"/>
        <dbReference type="ChEBI" id="CHEBI:15377"/>
        <dbReference type="ChEBI" id="CHEBI:15378"/>
        <dbReference type="ChEBI" id="CHEBI:30616"/>
        <dbReference type="ChEBI" id="CHEBI:43474"/>
        <dbReference type="ChEBI" id="CHEBI:456216"/>
        <dbReference type="EC" id="3.6.4.12"/>
    </reaction>
</comment>
<comment type="subunit">
    <text evidence="1">Component of the SWR1 chromatin-remodeling complex.</text>
</comment>
<comment type="subcellular location">
    <subcellularLocation>
        <location evidence="4">Nucleus</location>
    </subcellularLocation>
</comment>
<comment type="similarity">
    <text evidence="6">Belongs to the SNF2/RAD54 helicase family. SWR1 subfamily.</text>
</comment>
<accession>Q7S133</accession>
<protein>
    <recommendedName>
        <fullName>Helicase swr-1</fullName>
        <ecNumber>3.6.4.12</ecNumber>
    </recommendedName>
    <alternativeName>
        <fullName>Chromatin remodeling factor 1-1</fullName>
    </alternativeName>
</protein>
<gene>
    <name type="primary">crf1-1</name>
    <name type="synonym">swr1</name>
    <name type="ORF">NCU09993</name>
</gene>
<feature type="chain" id="PRO_0000074371" description="Helicase swr-1">
    <location>
        <begin position="1"/>
        <end position="1845"/>
    </location>
</feature>
<feature type="domain" description="HSA" evidence="4">
    <location>
        <begin position="418"/>
        <end position="493"/>
    </location>
</feature>
<feature type="domain" description="Helicase ATP-binding" evidence="2">
    <location>
        <begin position="957"/>
        <end position="1122"/>
    </location>
</feature>
<feature type="domain" description="Helicase C-terminal" evidence="3">
    <location>
        <begin position="1510"/>
        <end position="1660"/>
    </location>
</feature>
<feature type="region of interest" description="Disordered" evidence="5">
    <location>
        <begin position="1"/>
        <end position="329"/>
    </location>
</feature>
<feature type="region of interest" description="Disordered" evidence="5">
    <location>
        <begin position="539"/>
        <end position="713"/>
    </location>
</feature>
<feature type="region of interest" description="Disordered" evidence="5">
    <location>
        <begin position="749"/>
        <end position="935"/>
    </location>
</feature>
<feature type="region of interest" description="Disordered" evidence="5">
    <location>
        <begin position="1702"/>
        <end position="1724"/>
    </location>
</feature>
<feature type="region of interest" description="Disordered" evidence="5">
    <location>
        <begin position="1751"/>
        <end position="1783"/>
    </location>
</feature>
<feature type="region of interest" description="Disordered" evidence="5">
    <location>
        <begin position="1816"/>
        <end position="1845"/>
    </location>
</feature>
<feature type="short sequence motif" description="DEAH box">
    <location>
        <begin position="1073"/>
        <end position="1076"/>
    </location>
</feature>
<feature type="compositionally biased region" description="Polar residues" evidence="5">
    <location>
        <begin position="1"/>
        <end position="13"/>
    </location>
</feature>
<feature type="compositionally biased region" description="Low complexity" evidence="5">
    <location>
        <begin position="24"/>
        <end position="38"/>
    </location>
</feature>
<feature type="compositionally biased region" description="Polar residues" evidence="5">
    <location>
        <begin position="63"/>
        <end position="84"/>
    </location>
</feature>
<feature type="compositionally biased region" description="Low complexity" evidence="5">
    <location>
        <begin position="98"/>
        <end position="108"/>
    </location>
</feature>
<feature type="compositionally biased region" description="Basic and acidic residues" evidence="5">
    <location>
        <begin position="168"/>
        <end position="180"/>
    </location>
</feature>
<feature type="compositionally biased region" description="Polar residues" evidence="5">
    <location>
        <begin position="216"/>
        <end position="243"/>
    </location>
</feature>
<feature type="compositionally biased region" description="Pro residues" evidence="5">
    <location>
        <begin position="248"/>
        <end position="258"/>
    </location>
</feature>
<feature type="compositionally biased region" description="Pro residues" evidence="5">
    <location>
        <begin position="283"/>
        <end position="292"/>
    </location>
</feature>
<feature type="compositionally biased region" description="Acidic residues" evidence="5">
    <location>
        <begin position="549"/>
        <end position="565"/>
    </location>
</feature>
<feature type="compositionally biased region" description="Basic and acidic residues" evidence="5">
    <location>
        <begin position="574"/>
        <end position="585"/>
    </location>
</feature>
<feature type="compositionally biased region" description="Acidic residues" evidence="5">
    <location>
        <begin position="586"/>
        <end position="608"/>
    </location>
</feature>
<feature type="compositionally biased region" description="Acidic residues" evidence="5">
    <location>
        <begin position="663"/>
        <end position="704"/>
    </location>
</feature>
<feature type="compositionally biased region" description="Polar residues" evidence="5">
    <location>
        <begin position="762"/>
        <end position="777"/>
    </location>
</feature>
<feature type="compositionally biased region" description="Polar residues" evidence="5">
    <location>
        <begin position="815"/>
        <end position="834"/>
    </location>
</feature>
<feature type="compositionally biased region" description="Low complexity" evidence="5">
    <location>
        <begin position="888"/>
        <end position="897"/>
    </location>
</feature>
<feature type="compositionally biased region" description="Basic and acidic residues" evidence="5">
    <location>
        <begin position="898"/>
        <end position="909"/>
    </location>
</feature>
<feature type="compositionally biased region" description="Polar residues" evidence="5">
    <location>
        <begin position="922"/>
        <end position="933"/>
    </location>
</feature>
<feature type="compositionally biased region" description="Gly residues" evidence="5">
    <location>
        <begin position="1704"/>
        <end position="1718"/>
    </location>
</feature>
<feature type="compositionally biased region" description="Low complexity" evidence="5">
    <location>
        <begin position="1769"/>
        <end position="1781"/>
    </location>
</feature>
<feature type="compositionally biased region" description="Basic residues" evidence="5">
    <location>
        <begin position="1826"/>
        <end position="1845"/>
    </location>
</feature>
<feature type="binding site" evidence="2">
    <location>
        <begin position="970"/>
        <end position="977"/>
    </location>
    <ligand>
        <name>ATP</name>
        <dbReference type="ChEBI" id="CHEBI:30616"/>
    </ligand>
</feature>
<keyword id="KW-0010">Activator</keyword>
<keyword id="KW-0067">ATP-binding</keyword>
<keyword id="KW-0156">Chromatin regulator</keyword>
<keyword id="KW-0238">DNA-binding</keyword>
<keyword id="KW-0347">Helicase</keyword>
<keyword id="KW-0378">Hydrolase</keyword>
<keyword id="KW-0547">Nucleotide-binding</keyword>
<keyword id="KW-0539">Nucleus</keyword>
<keyword id="KW-1185">Reference proteome</keyword>
<keyword id="KW-0804">Transcription</keyword>
<keyword id="KW-0805">Transcription regulation</keyword>
<evidence type="ECO:0000250" key="1"/>
<evidence type="ECO:0000255" key="2">
    <source>
        <dbReference type="PROSITE-ProRule" id="PRU00541"/>
    </source>
</evidence>
<evidence type="ECO:0000255" key="3">
    <source>
        <dbReference type="PROSITE-ProRule" id="PRU00542"/>
    </source>
</evidence>
<evidence type="ECO:0000255" key="4">
    <source>
        <dbReference type="PROSITE-ProRule" id="PRU00549"/>
    </source>
</evidence>
<evidence type="ECO:0000256" key="5">
    <source>
        <dbReference type="SAM" id="MobiDB-lite"/>
    </source>
</evidence>
<evidence type="ECO:0000305" key="6"/>
<organism>
    <name type="scientific">Neurospora crassa (strain ATCC 24698 / 74-OR23-1A / CBS 708.71 / DSM 1257 / FGSC 987)</name>
    <dbReference type="NCBI Taxonomy" id="367110"/>
    <lineage>
        <taxon>Eukaryota</taxon>
        <taxon>Fungi</taxon>
        <taxon>Dikarya</taxon>
        <taxon>Ascomycota</taxon>
        <taxon>Pezizomycotina</taxon>
        <taxon>Sordariomycetes</taxon>
        <taxon>Sordariomycetidae</taxon>
        <taxon>Sordariales</taxon>
        <taxon>Sordariaceae</taxon>
        <taxon>Neurospora</taxon>
    </lineage>
</organism>
<name>SWR1_NEUCR</name>
<reference key="1">
    <citation type="journal article" date="2003" name="Nature">
        <title>The genome sequence of the filamentous fungus Neurospora crassa.</title>
        <authorList>
            <person name="Galagan J.E."/>
            <person name="Calvo S.E."/>
            <person name="Borkovich K.A."/>
            <person name="Selker E.U."/>
            <person name="Read N.D."/>
            <person name="Jaffe D.B."/>
            <person name="FitzHugh W."/>
            <person name="Ma L.-J."/>
            <person name="Smirnov S."/>
            <person name="Purcell S."/>
            <person name="Rehman B."/>
            <person name="Elkins T."/>
            <person name="Engels R."/>
            <person name="Wang S."/>
            <person name="Nielsen C.B."/>
            <person name="Butler J."/>
            <person name="Endrizzi M."/>
            <person name="Qui D."/>
            <person name="Ianakiev P."/>
            <person name="Bell-Pedersen D."/>
            <person name="Nelson M.A."/>
            <person name="Werner-Washburne M."/>
            <person name="Selitrennikoff C.P."/>
            <person name="Kinsey J.A."/>
            <person name="Braun E.L."/>
            <person name="Zelter A."/>
            <person name="Schulte U."/>
            <person name="Kothe G.O."/>
            <person name="Jedd G."/>
            <person name="Mewes H.-W."/>
            <person name="Staben C."/>
            <person name="Marcotte E."/>
            <person name="Greenberg D."/>
            <person name="Roy A."/>
            <person name="Foley K."/>
            <person name="Naylor J."/>
            <person name="Stange-Thomann N."/>
            <person name="Barrett R."/>
            <person name="Gnerre S."/>
            <person name="Kamal M."/>
            <person name="Kamvysselis M."/>
            <person name="Mauceli E.W."/>
            <person name="Bielke C."/>
            <person name="Rudd S."/>
            <person name="Frishman D."/>
            <person name="Krystofova S."/>
            <person name="Rasmussen C."/>
            <person name="Metzenberg R.L."/>
            <person name="Perkins D.D."/>
            <person name="Kroken S."/>
            <person name="Cogoni C."/>
            <person name="Macino G."/>
            <person name="Catcheside D.E.A."/>
            <person name="Li W."/>
            <person name="Pratt R.J."/>
            <person name="Osmani S.A."/>
            <person name="DeSouza C.P.C."/>
            <person name="Glass N.L."/>
            <person name="Orbach M.J."/>
            <person name="Berglund J.A."/>
            <person name="Voelker R."/>
            <person name="Yarden O."/>
            <person name="Plamann M."/>
            <person name="Seiler S."/>
            <person name="Dunlap J.C."/>
            <person name="Radford A."/>
            <person name="Aramayo R."/>
            <person name="Natvig D.O."/>
            <person name="Alex L.A."/>
            <person name="Mannhaupt G."/>
            <person name="Ebbole D.J."/>
            <person name="Freitag M."/>
            <person name="Paulsen I."/>
            <person name="Sachs M.S."/>
            <person name="Lander E.S."/>
            <person name="Nusbaum C."/>
            <person name="Birren B.W."/>
        </authorList>
    </citation>
    <scope>NUCLEOTIDE SEQUENCE [LARGE SCALE GENOMIC DNA]</scope>
    <source>
        <strain>ATCC 24698 / 74-OR23-1A / CBS 708.71 / DSM 1257 / FGSC 987</strain>
    </source>
</reference>
<proteinExistence type="inferred from homology"/>